<evidence type="ECO:0000255" key="1">
    <source>
        <dbReference type="PROSITE-ProRule" id="PRU00768"/>
    </source>
</evidence>
<evidence type="ECO:0000256" key="2">
    <source>
        <dbReference type="SAM" id="MobiDB-lite"/>
    </source>
</evidence>
<evidence type="ECO:0000269" key="3">
    <source>
    </source>
</evidence>
<evidence type="ECO:0000269" key="4">
    <source>
    </source>
</evidence>
<evidence type="ECO:0000269" key="5">
    <source>
    </source>
</evidence>
<evidence type="ECO:0000303" key="6">
    <source>
    </source>
</evidence>
<evidence type="ECO:0000303" key="7">
    <source>
    </source>
</evidence>
<evidence type="ECO:0000305" key="8"/>
<evidence type="ECO:0000312" key="9">
    <source>
        <dbReference type="Araport" id="AT4G13750"/>
    </source>
</evidence>
<evidence type="ECO:0000312" key="10">
    <source>
        <dbReference type="EMBL" id="CAB36838.1"/>
    </source>
</evidence>
<evidence type="ECO:0000312" key="11">
    <source>
        <dbReference type="EMBL" id="CAB36839.1"/>
    </source>
</evidence>
<proteinExistence type="evidence at protein level"/>
<dbReference type="EMBL" id="AL035528">
    <property type="protein sequence ID" value="CAB36838.1"/>
    <property type="status" value="ALT_SEQ"/>
    <property type="molecule type" value="Genomic_DNA"/>
</dbReference>
<dbReference type="EMBL" id="AL035528">
    <property type="protein sequence ID" value="CAB36839.1"/>
    <property type="status" value="ALT_SEQ"/>
    <property type="molecule type" value="Genomic_DNA"/>
</dbReference>
<dbReference type="EMBL" id="AL161537">
    <property type="protein sequence ID" value="CAB78416.1"/>
    <property type="status" value="ALT_SEQ"/>
    <property type="molecule type" value="Genomic_DNA"/>
</dbReference>
<dbReference type="EMBL" id="AL161537">
    <property type="protein sequence ID" value="CAB78417.1"/>
    <property type="status" value="ALT_SEQ"/>
    <property type="molecule type" value="Genomic_DNA"/>
</dbReference>
<dbReference type="EMBL" id="CP002687">
    <property type="protein sequence ID" value="AEE83321.1"/>
    <property type="molecule type" value="Genomic_DNA"/>
</dbReference>
<dbReference type="PIR" id="T05243">
    <property type="entry name" value="T05243"/>
</dbReference>
<dbReference type="PIR" id="T05244">
    <property type="entry name" value="T05244"/>
</dbReference>
<dbReference type="RefSeq" id="NP_193111.2">
    <property type="nucleotide sequence ID" value="NM_117449.4"/>
</dbReference>
<dbReference type="FunCoup" id="F4JTS8">
    <property type="interactions" value="347"/>
</dbReference>
<dbReference type="STRING" id="3702.F4JTS8"/>
<dbReference type="iPTMnet" id="F4JTS8"/>
<dbReference type="PaxDb" id="3702-AT4G13750.1"/>
<dbReference type="ProteomicsDB" id="210111"/>
<dbReference type="EnsemblPlants" id="AT4G13750.1">
    <property type="protein sequence ID" value="AT4G13750.1"/>
    <property type="gene ID" value="AT4G13750"/>
</dbReference>
<dbReference type="GeneID" id="827009"/>
<dbReference type="Gramene" id="AT4G13750.1">
    <property type="protein sequence ID" value="AT4G13750.1"/>
    <property type="gene ID" value="AT4G13750"/>
</dbReference>
<dbReference type="KEGG" id="ath:AT4G13750"/>
<dbReference type="Araport" id="AT4G13750"/>
<dbReference type="TAIR" id="AT4G13750">
    <property type="gene designation" value="NOV"/>
</dbReference>
<dbReference type="eggNOG" id="ENOG502QQIR">
    <property type="taxonomic scope" value="Eukaryota"/>
</dbReference>
<dbReference type="HOGENOM" id="CLU_229311_0_0_1"/>
<dbReference type="InParanoid" id="F4JTS8"/>
<dbReference type="OMA" id="PLEVHVN"/>
<dbReference type="PRO" id="PR:F4JTS8"/>
<dbReference type="Proteomes" id="UP000006548">
    <property type="component" value="Chromosome 4"/>
</dbReference>
<dbReference type="ExpressionAtlas" id="F4JTS8">
    <property type="expression patterns" value="baseline and differential"/>
</dbReference>
<dbReference type="GO" id="GO:0005634">
    <property type="term" value="C:nucleus"/>
    <property type="evidence" value="ECO:0000314"/>
    <property type="project" value="TAIR"/>
</dbReference>
<dbReference type="GO" id="GO:0009926">
    <property type="term" value="P:auxin polar transport"/>
    <property type="evidence" value="ECO:0000315"/>
    <property type="project" value="TAIR"/>
</dbReference>
<dbReference type="GO" id="GO:0001708">
    <property type="term" value="P:cell fate specification"/>
    <property type="evidence" value="ECO:0000315"/>
    <property type="project" value="TAIR"/>
</dbReference>
<dbReference type="GO" id="GO:0009793">
    <property type="term" value="P:embryo development ending in seed dormancy"/>
    <property type="evidence" value="ECO:0000315"/>
    <property type="project" value="TAIR"/>
</dbReference>
<dbReference type="GO" id="GO:0010305">
    <property type="term" value="P:leaf vascular tissue pattern formation"/>
    <property type="evidence" value="ECO:0000315"/>
    <property type="project" value="TAIR"/>
</dbReference>
<dbReference type="GO" id="GO:0048364">
    <property type="term" value="P:root development"/>
    <property type="evidence" value="ECO:0000315"/>
    <property type="project" value="TAIR"/>
</dbReference>
<dbReference type="GO" id="GO:0019827">
    <property type="term" value="P:stem cell population maintenance"/>
    <property type="evidence" value="ECO:0000315"/>
    <property type="project" value="TAIR"/>
</dbReference>
<dbReference type="FunFam" id="3.30.565.10:FF:000105">
    <property type="entry name" value="Histidine kinase-DNA gyrase B-and HSP90-like ATPase family protein"/>
    <property type="match status" value="1"/>
</dbReference>
<dbReference type="Gene3D" id="3.30.565.10">
    <property type="entry name" value="Histidine kinase-like ATPase, C-terminal domain"/>
    <property type="match status" value="1"/>
</dbReference>
<dbReference type="InterPro" id="IPR052957">
    <property type="entry name" value="Auxin_embryo_med"/>
</dbReference>
<dbReference type="InterPro" id="IPR036890">
    <property type="entry name" value="HATPase_C_sf"/>
</dbReference>
<dbReference type="InterPro" id="IPR024975">
    <property type="entry name" value="NOV_C"/>
</dbReference>
<dbReference type="NCBIfam" id="NF047352">
    <property type="entry name" value="P_loop_sacsin"/>
    <property type="match status" value="1"/>
</dbReference>
<dbReference type="PANTHER" id="PTHR32387:SF0">
    <property type="entry name" value="PROTEIN NO VEIN"/>
    <property type="match status" value="1"/>
</dbReference>
<dbReference type="PANTHER" id="PTHR32387">
    <property type="entry name" value="WU:FJ29H11"/>
    <property type="match status" value="1"/>
</dbReference>
<dbReference type="Pfam" id="PF13020">
    <property type="entry name" value="NOV_C"/>
    <property type="match status" value="1"/>
</dbReference>
<dbReference type="SUPFAM" id="SSF55874">
    <property type="entry name" value="ATPase domain of HSP90 chaperone/DNA topoisomerase II/histidine kinase"/>
    <property type="match status" value="1"/>
</dbReference>
<protein>
    <recommendedName>
        <fullName evidence="7">Protein NO VEIN</fullName>
    </recommendedName>
    <alternativeName>
        <fullName evidence="6">Protein EMBRYO DEFECTIVE 2597</fullName>
    </alternativeName>
</protein>
<accession>F4JTS8</accession>
<accession>Q9SVN7</accession>
<accession>Q9SVN8</accession>
<organism>
    <name type="scientific">Arabidopsis thaliana</name>
    <name type="common">Mouse-ear cress</name>
    <dbReference type="NCBI Taxonomy" id="3702"/>
    <lineage>
        <taxon>Eukaryota</taxon>
        <taxon>Viridiplantae</taxon>
        <taxon>Streptophyta</taxon>
        <taxon>Embryophyta</taxon>
        <taxon>Tracheophyta</taxon>
        <taxon>Spermatophyta</taxon>
        <taxon>Magnoliopsida</taxon>
        <taxon>eudicotyledons</taxon>
        <taxon>Gunneridae</taxon>
        <taxon>Pentapetalae</taxon>
        <taxon>rosids</taxon>
        <taxon>malvids</taxon>
        <taxon>Brassicales</taxon>
        <taxon>Brassicaceae</taxon>
        <taxon>Camelineae</taxon>
        <taxon>Arabidopsis</taxon>
    </lineage>
</organism>
<gene>
    <name evidence="7" type="primary">NOV</name>
    <name evidence="6" type="synonym">EMB2597</name>
    <name evidence="9" type="ordered locus">At4g13750</name>
    <name evidence="10" type="ORF">F18A5.130</name>
    <name evidence="11" type="ORF">F18A5.140</name>
</gene>
<keyword id="KW-0539">Nucleus</keyword>
<keyword id="KW-1185">Reference proteome</keyword>
<feature type="chain" id="PRO_0000446981" description="Protein NO VEIN">
    <location>
        <begin position="1"/>
        <end position="2729"/>
    </location>
</feature>
<feature type="region of interest" description="Disordered" evidence="2">
    <location>
        <begin position="1"/>
        <end position="27"/>
    </location>
</feature>
<feature type="region of interest" description="Disordered" evidence="2">
    <location>
        <begin position="477"/>
        <end position="517"/>
    </location>
</feature>
<feature type="region of interest" description="Disordered" evidence="2">
    <location>
        <begin position="2482"/>
        <end position="2515"/>
    </location>
</feature>
<feature type="short sequence motif" description="Nuclear localization signal 1" evidence="1">
    <location>
        <begin position="194"/>
        <end position="201"/>
    </location>
</feature>
<feature type="short sequence motif" description="Nuclear localization signal 2" evidence="1">
    <location>
        <begin position="473"/>
        <end position="480"/>
    </location>
</feature>
<feature type="compositionally biased region" description="Basic and acidic residues" evidence="2">
    <location>
        <begin position="488"/>
        <end position="497"/>
    </location>
</feature>
<feature type="compositionally biased region" description="Basic and acidic residues" evidence="2">
    <location>
        <begin position="2496"/>
        <end position="2515"/>
    </location>
</feature>
<feature type="mutagenesis site" description="In nov-1; many auxin-dependent development defects including narrow rosette leaves with few veins. Abnormal presence of starch granules in roots columella stem cells associated with an altered maintenance of cortex/endodermis stem cells. Enhanced effect of 1-naphthylphthalamic acid (NPA), an inhibitor of polar auxin transport. Disturbed subcellular localizations of PIN1, PIN2, PIN3, PIN4 and PIN7 in leaf primordia and root tips." evidence="4 5">
    <original>P</original>
    <variation>S</variation>
    <location>
        <position position="855"/>
    </location>
</feature>
<name>NOV_ARATH</name>
<comment type="function">
    <text evidence="3 4 5">Essential protein required for cell fate determination during embryogenesis (PubMed:15266054). Mediates auxin-dependent coordinated cell-fate specification and patterning in embryos (e.g. cotyledon outgrowth and separation), shoots and roots (e.g. leaf vascular development, cellular patterning and stem cell maintenance in the meristems) (PubMed:19880797, PubMed:20729639). Required for provascular PIN1 expression and region-specific expression of PIN7 in leaf primordia, cell type-specific expression of PIN3, PIN4, and PIN7 in the root, and PIN2 polarity in the root cortex (PubMed:19880797, PubMed:20729639).</text>
</comment>
<comment type="subcellular location">
    <subcellularLocation>
        <location evidence="1 4">Nucleus</location>
    </subcellularLocation>
    <text evidence="4">Accumulates in speckles within the nucleus and the nucleolus.</text>
</comment>
<comment type="tissue specificity">
    <text evidence="4">Specifically expressed in developing embryos, leaf primordia, and shoot and root apical meristems.</text>
</comment>
<comment type="developmental stage">
    <text evidence="4">In shoots, expressed in developing leaf primordia and, weakly, in the shoot apical meristem (SAM). First observed throughout young leaf primordia, but, as leaf primordia develop, restricted to the adaxial side of primordia and then toward the basal side. In seeds, present in developing embryos and later in provascular cells of cotyledons at the early stage of vascular differentiation. In roots, accumulates in the root apical meristem (RAM) with weak expression in the quiescent center and columella initials but not in mature root tissues; also expressed during primordial development of lateral roots.</text>
</comment>
<comment type="disruption phenotype">
    <text evidence="3 4">Embryo-defective phenotype characterized by size reduction and frequent fusion of cotyledons.</text>
</comment>
<comment type="sequence caution" evidence="8">
    <conflict type="erroneous gene model prediction">
        <sequence resource="EMBL-CDS" id="CAB36838"/>
    </conflict>
    <text>Was originally thought to correspond to two different genes At4g13740 and At4g13750.</text>
</comment>
<comment type="sequence caution" evidence="8">
    <conflict type="erroneous gene model prediction">
        <sequence resource="EMBL-CDS" id="CAB36839"/>
    </conflict>
    <text>Was originally thought to correspond to two different genes At4g13740 and At4g13750.</text>
</comment>
<comment type="sequence caution" evidence="8">
    <conflict type="erroneous gene model prediction">
        <sequence resource="EMBL-CDS" id="CAB78416"/>
    </conflict>
    <text>Was originally thought to correspond to two different genes At4g13740 and At4g13750.</text>
</comment>
<comment type="sequence caution" evidence="8">
    <conflict type="erroneous gene model prediction">
        <sequence resource="EMBL-CDS" id="CAB78417"/>
    </conflict>
    <text>Was originally thought to correspond to two different genes At4g13740 and At4g13750.</text>
</comment>
<comment type="online information" name="Seed defective Arabidopsis mutants">
    <link uri="http://seedgenes.org/MutantList"/>
</comment>
<reference key="1">
    <citation type="journal article" date="1999" name="Nature">
        <title>Sequence and analysis of chromosome 4 of the plant Arabidopsis thaliana.</title>
        <authorList>
            <person name="Mayer K.F.X."/>
            <person name="Schueller C."/>
            <person name="Wambutt R."/>
            <person name="Murphy G."/>
            <person name="Volckaert G."/>
            <person name="Pohl T."/>
            <person name="Duesterhoeft A."/>
            <person name="Stiekema W."/>
            <person name="Entian K.-D."/>
            <person name="Terryn N."/>
            <person name="Harris B."/>
            <person name="Ansorge W."/>
            <person name="Brandt P."/>
            <person name="Grivell L.A."/>
            <person name="Rieger M."/>
            <person name="Weichselgartner M."/>
            <person name="de Simone V."/>
            <person name="Obermaier B."/>
            <person name="Mache R."/>
            <person name="Mueller M."/>
            <person name="Kreis M."/>
            <person name="Delseny M."/>
            <person name="Puigdomenech P."/>
            <person name="Watson M."/>
            <person name="Schmidtheini T."/>
            <person name="Reichert B."/>
            <person name="Portetelle D."/>
            <person name="Perez-Alonso M."/>
            <person name="Boutry M."/>
            <person name="Bancroft I."/>
            <person name="Vos P."/>
            <person name="Hoheisel J."/>
            <person name="Zimmermann W."/>
            <person name="Wedler H."/>
            <person name="Ridley P."/>
            <person name="Langham S.-A."/>
            <person name="McCullagh B."/>
            <person name="Bilham L."/>
            <person name="Robben J."/>
            <person name="van der Schueren J."/>
            <person name="Grymonprez B."/>
            <person name="Chuang Y.-J."/>
            <person name="Vandenbussche F."/>
            <person name="Braeken M."/>
            <person name="Weltjens I."/>
            <person name="Voet M."/>
            <person name="Bastiaens I."/>
            <person name="Aert R."/>
            <person name="Defoor E."/>
            <person name="Weitzenegger T."/>
            <person name="Bothe G."/>
            <person name="Ramsperger U."/>
            <person name="Hilbert H."/>
            <person name="Braun M."/>
            <person name="Holzer E."/>
            <person name="Brandt A."/>
            <person name="Peters S."/>
            <person name="van Staveren M."/>
            <person name="Dirkse W."/>
            <person name="Mooijman P."/>
            <person name="Klein Lankhorst R."/>
            <person name="Rose M."/>
            <person name="Hauf J."/>
            <person name="Koetter P."/>
            <person name="Berneiser S."/>
            <person name="Hempel S."/>
            <person name="Feldpausch M."/>
            <person name="Lamberth S."/>
            <person name="Van den Daele H."/>
            <person name="De Keyser A."/>
            <person name="Buysshaert C."/>
            <person name="Gielen J."/>
            <person name="Villarroel R."/>
            <person name="De Clercq R."/>
            <person name="van Montagu M."/>
            <person name="Rogers J."/>
            <person name="Cronin A."/>
            <person name="Quail M.A."/>
            <person name="Bray-Allen S."/>
            <person name="Clark L."/>
            <person name="Doggett J."/>
            <person name="Hall S."/>
            <person name="Kay M."/>
            <person name="Lennard N."/>
            <person name="McLay K."/>
            <person name="Mayes R."/>
            <person name="Pettett A."/>
            <person name="Rajandream M.A."/>
            <person name="Lyne M."/>
            <person name="Benes V."/>
            <person name="Rechmann S."/>
            <person name="Borkova D."/>
            <person name="Bloecker H."/>
            <person name="Scharfe M."/>
            <person name="Grimm M."/>
            <person name="Loehnert T.-H."/>
            <person name="Dose S."/>
            <person name="de Haan M."/>
            <person name="Maarse A.C."/>
            <person name="Schaefer M."/>
            <person name="Mueller-Auer S."/>
            <person name="Gabel C."/>
            <person name="Fuchs M."/>
            <person name="Fartmann B."/>
            <person name="Granderath K."/>
            <person name="Dauner D."/>
            <person name="Herzl A."/>
            <person name="Neumann S."/>
            <person name="Argiriou A."/>
            <person name="Vitale D."/>
            <person name="Liguori R."/>
            <person name="Piravandi E."/>
            <person name="Massenet O."/>
            <person name="Quigley F."/>
            <person name="Clabauld G."/>
            <person name="Muendlein A."/>
            <person name="Felber R."/>
            <person name="Schnabl S."/>
            <person name="Hiller R."/>
            <person name="Schmidt W."/>
            <person name="Lecharny A."/>
            <person name="Aubourg S."/>
            <person name="Chefdor F."/>
            <person name="Cooke R."/>
            <person name="Berger C."/>
            <person name="Monfort A."/>
            <person name="Casacuberta E."/>
            <person name="Gibbons T."/>
            <person name="Weber N."/>
            <person name="Vandenbol M."/>
            <person name="Bargues M."/>
            <person name="Terol J."/>
            <person name="Torres A."/>
            <person name="Perez-Perez A."/>
            <person name="Purnelle B."/>
            <person name="Bent E."/>
            <person name="Johnson S."/>
            <person name="Tacon D."/>
            <person name="Jesse T."/>
            <person name="Heijnen L."/>
            <person name="Schwarz S."/>
            <person name="Scholler P."/>
            <person name="Heber S."/>
            <person name="Francs P."/>
            <person name="Bielke C."/>
            <person name="Frishman D."/>
            <person name="Haase D."/>
            <person name="Lemcke K."/>
            <person name="Mewes H.-W."/>
            <person name="Stocker S."/>
            <person name="Zaccaria P."/>
            <person name="Bevan M."/>
            <person name="Wilson R.K."/>
            <person name="de la Bastide M."/>
            <person name="Habermann K."/>
            <person name="Parnell L."/>
            <person name="Dedhia N."/>
            <person name="Gnoj L."/>
            <person name="Schutz K."/>
            <person name="Huang E."/>
            <person name="Spiegel L."/>
            <person name="Sekhon M."/>
            <person name="Murray J."/>
            <person name="Sheet P."/>
            <person name="Cordes M."/>
            <person name="Abu-Threideh J."/>
            <person name="Stoneking T."/>
            <person name="Kalicki J."/>
            <person name="Graves T."/>
            <person name="Harmon G."/>
            <person name="Edwards J."/>
            <person name="Latreille P."/>
            <person name="Courtney L."/>
            <person name="Cloud J."/>
            <person name="Abbott A."/>
            <person name="Scott K."/>
            <person name="Johnson D."/>
            <person name="Minx P."/>
            <person name="Bentley D."/>
            <person name="Fulton B."/>
            <person name="Miller N."/>
            <person name="Greco T."/>
            <person name="Kemp K."/>
            <person name="Kramer J."/>
            <person name="Fulton L."/>
            <person name="Mardis E."/>
            <person name="Dante M."/>
            <person name="Pepin K."/>
            <person name="Hillier L.W."/>
            <person name="Nelson J."/>
            <person name="Spieth J."/>
            <person name="Ryan E."/>
            <person name="Andrews S."/>
            <person name="Geisel C."/>
            <person name="Layman D."/>
            <person name="Du H."/>
            <person name="Ali J."/>
            <person name="Berghoff A."/>
            <person name="Jones K."/>
            <person name="Drone K."/>
            <person name="Cotton M."/>
            <person name="Joshu C."/>
            <person name="Antonoiu B."/>
            <person name="Zidanic M."/>
            <person name="Strong C."/>
            <person name="Sun H."/>
            <person name="Lamar B."/>
            <person name="Yordan C."/>
            <person name="Ma P."/>
            <person name="Zhong J."/>
            <person name="Preston R."/>
            <person name="Vil D."/>
            <person name="Shekher M."/>
            <person name="Matero A."/>
            <person name="Shah R."/>
            <person name="Swaby I.K."/>
            <person name="O'Shaughnessy A."/>
            <person name="Rodriguez M."/>
            <person name="Hoffman J."/>
            <person name="Till S."/>
            <person name="Granat S."/>
            <person name="Shohdy N."/>
            <person name="Hasegawa A."/>
            <person name="Hameed A."/>
            <person name="Lodhi M."/>
            <person name="Johnson A."/>
            <person name="Chen E."/>
            <person name="Marra M.A."/>
            <person name="Martienssen R."/>
            <person name="McCombie W.R."/>
        </authorList>
    </citation>
    <scope>NUCLEOTIDE SEQUENCE [LARGE SCALE GENOMIC DNA]</scope>
    <source>
        <strain>cv. Columbia</strain>
    </source>
</reference>
<reference key="2">
    <citation type="journal article" date="2017" name="Plant J.">
        <title>Araport11: a complete reannotation of the Arabidopsis thaliana reference genome.</title>
        <authorList>
            <person name="Cheng C.Y."/>
            <person name="Krishnakumar V."/>
            <person name="Chan A.P."/>
            <person name="Thibaud-Nissen F."/>
            <person name="Schobel S."/>
            <person name="Town C.D."/>
        </authorList>
    </citation>
    <scope>GENOME REANNOTATION</scope>
    <source>
        <strain>cv. Columbia</strain>
    </source>
</reference>
<reference key="3">
    <citation type="journal article" date="2004" name="Plant Physiol.">
        <title>Identification of genes required for embryo development in Arabidopsis.</title>
        <authorList>
            <person name="Tzafrir I."/>
            <person name="Pena-Muralla R."/>
            <person name="Dickerman A."/>
            <person name="Berg M."/>
            <person name="Rogers R."/>
            <person name="Hutchens S."/>
            <person name="Sweeney T.C."/>
            <person name="McElver J."/>
            <person name="Aux G."/>
            <person name="Patton D."/>
            <person name="Meinke D."/>
        </authorList>
    </citation>
    <scope>FUNCTION [LARGE SCALE ANALYSIS]</scope>
    <scope>DISRUPTION PHENOTYPE [LARGE SCALE ANALYSIS]</scope>
    <source>
        <strain>cv. Columbia</strain>
    </source>
</reference>
<reference key="4">
    <citation type="journal article" date="2009" name="Plant Cell">
        <title>NO VEIN mediates auxin-dependent specification and patterning in the Arabidopsis embryo, shoot, and root.</title>
        <authorList>
            <person name="Tsugeki R."/>
            <person name="Ditengou F.A."/>
            <person name="Sumi Y."/>
            <person name="Teale W."/>
            <person name="Palme K."/>
            <person name="Okada K."/>
        </authorList>
    </citation>
    <scope>FUNCTION</scope>
    <scope>MUTAGENESIS OF PRO-855</scope>
    <scope>DISRUPTION PHENOTYPE</scope>
    <scope>TISSUE SPECIFICITY</scope>
    <scope>DEVELOPMENTAL STAGE</scope>
    <scope>SUBCELLULAR LOCATION</scope>
    <scope>GENE FAMILY</scope>
</reference>
<reference key="5">
    <citation type="journal article" date="2010" name="Plant Signal. Behav.">
        <title>NO VEIN facilitates auxin-mediated development in Arabidopsis.</title>
        <authorList>
            <person name="Tsugeki R."/>
            <person name="Ditengou F.A."/>
            <person name="Palme K."/>
            <person name="Okada K."/>
        </authorList>
    </citation>
    <scope>FUNCTION</scope>
    <scope>MUTAGENESIS OF PRO-855</scope>
</reference>
<sequence length="2729" mass="306349">MQGNHDGSWSLHPSTNNGSGRANGNININTVPGGGYLPQANPVFPNFNQPIRYPIPQFPANFYRPNFPDFSLGNPNFQPHQNLNFLHQQIPHQYGSAANHFLQNHNQNSFSFPPQSIPNNDISISQNHGAFENSSLKRRRQEEVVQVTDVVPKSNFASGESANNSFSVSLPIPIATDDSGVSRVHGEKSSGKPKRKVDVLRIDKAVNKTRKLFVAAGESVSSTRVSRAVLEELQADSWRSLGVQMQDVPSLRQLMAIEGKINAFIHCFVGARRIVTLHDLEVAICRNEFVDSFDDLELGPLLQHPLVLLYFPSISSSTGPVKITSEEIISFLDSYLHTYMTEDVKLDEFLNFVASQKSVTSKEKLGVRIQSLRMYVSFILDAKRQEGETLKVLLTELHQKYHIPSSKKQQRDKSLTVSERADSFALHHKDYCGKHIRFDSSSSDENDNVYEVRNLNSSDHINSCPYPSVAEEMKRLGGSNKKRKGERRNHEKSDSSKLLRKSPSKLQGHAKQEIPKLADDSEAKKVFSVDEADFTLSEGDLRLFISTWKDTCKELSISTFVEKMLSFYNLGGSEGRAQIKRAKAMSSFPFVGLLNVAVTSLRRGMWDSIYDNFQMTSLSDTTNTGSGNQVGEINPIENSELSKTQHVMPPTHCNTVEEIIRRLSLYFEHDLSGAKHIGIFRKLQTCENLLAEQFQVQDFESLGWGGFFAFLEKHMLLLPTQLQRFLSRELQEEFPLEVHVNENLLTLLLSQASEFSSDKVLSRQTLARLVAEQFPSISFKVVGRDSEENFSEIIGKKKSSSKCVLFSATLLGAENSLTSKYLEESLTVGNDTEARSTTLNAVASKEVLDVLLRVPLLSDLNSWCHWDLRYAPQFGPLMGCLNEINSTDLLCLVTRDGKIIRADPSATADSFLEAALQGSAYRTAAQLLSLISLNGRTHLPFSLLKCYAKRAFEVFFYNYSEEMELNDRNSLVQMHGPEKLSTSFDKVIVVGEKAKVAKRDYAASKFLLDCLGYLPGEFRSLVVDILLPGLRSVVKDAPTRVLSACEQTEQRIMLHDAGLLLGIVEWISDYHKFCSSCSPNSSIVENASSNLDSGAGFVQNELEDPVQTKQRCMIVSEKSCEYKEEPHESCHTFGGSGILCDSVGEAFTQTAPEFYDNRASVIDSIRRDEFGLDLTSSGSEMSMLQKQHARLGRALQCLSQELYSQDSHFILELVQNADDNKYPEHVEPTLTFILQKTGIVVLNNECGFMPENIRALCDVGQSTKKGSGGYIGKKGIGFKSVFRVSDAPEIHSNGFHFKFDISEGQIGYILPTVVPPHDIESLSSMLSGRALHLKDAGWNTCITLPFRAIDSERTTVNHIEPMFSDLHPSLLLFLHRLQCIVYRNVLDDSLLVMRKEVVSKNIVKVSCGENSMTWFVASEKLKATNLRDDVQTTEISIGFTLDMLEDGTYRSCMIQEPVFAFLPLRTYGLKFIIQGDFILTSSREDVDEDSPWNQWLLSEFPGLFVDALRSFCSLPSFTQNLGKGVSSYMQLVPLVGEVHGFFSSLPRSIISRLRTTNCLLLEGDGEEWVPPCKVLRNWNEKIRVLLKDGLLQEHLALGFLDKDIVLSDSLSRALGIEDYGPKTLVQILSSLSHKNGCLQSMGFTWLSSILTELYLLFRSSGHGNVELGIDKSLIDDLHKIPFIPLSNGKFTSLDEGAVWLHHDTTGLDLGDVFEAFPVLYGNLRTIDHSLLLASSVDEKSSVDDLVNMLCAIGVQKLSAHEIVKAHILPAFEARSTGAVDGLMVDYLCFVMTHLRSGCHICLKERKYIISELRSKALVLSNYGLKQLGEGSIHFGEEYGNQVNMKKLTKNLDISWHVVDGTYLKHPASKFYACGLKEWREFFQEIGIADFVQVVQVEKSIAEFYSVSHCEKYDINLLSPDLTVKDWESPELVDLLSLLHKSNGRKGCKYLLEVLDRLWDDCYYDKTTVNYNSGTHGIIRSSESSFMRVICDSLWIVSSMDSKLHLSKDLYHDCDDVQSILGMNAPYAVPTVTSVKLLSDIGFKTKVSLDDALEVLESWVHCGDSFKSSISQITRFYKYLWNEMADSKQKITEKLHTLPSVFVPHGIASRQNDMISGIFLSLDDVYWNDSAGVLDEIKEISSQISSVVEPLRRKTLGNIYPGLHDFFVNGCGVPETPSFQEYLKILGQFAHNVSPSSAAKAVFKIFLKWSDDLNSGKSSEDVIHFKERLSELEYTVLPTENDKWVSLHSSFGLVCWCDNEKLKKRFKNKDKIEFISFGENDDEGQEVLQTKVSGLMHSLGIPSISEVVKREAKYEGLQDNTVTVSLVNWALPYAQRYIFTLHHEKYTQTKKTVHSQVKRLQVFVVDKLSYRNVIPQYGISSKKEFKCSSLLQDKALYTTPSLDSHSLFMELSRLFFNGVPDLHLANFLHLIKTMAESGLSEEQMESFILNSQKVHQVPDGEEIWSLKSAVKAKKKAGISLSWLPSSSKTRHGSSKTNTDDSKQELDTSSSKEDVTEALEEKIPIEMTNTNLVSGYDNCAGTSSRASEPNPLHSMHMISGSTSGNQAAMHLNPNLPHEWNNSFTANFSDRDQLHTGTPWAAQAQQTGRKGEEIAYRYFVAKYGNEALVKWVNDQSETGLPYDLMIENRGGKKEYVEVKATVSTRKDYFNLTVREWQFANEKGESYIIAHVLLGNSNAILTQHRNPVKLCQEGHLRLLVLMPNQRNEVNVTF</sequence>